<protein>
    <recommendedName>
        <fullName>Hydroxyacylglutathione hydrolase, mitochondrial</fullName>
        <ecNumber evidence="1">3.1.2.6</ecNumber>
    </recommendedName>
    <alternativeName>
        <fullName>Germ cell-specific protein</fullName>
    </alternativeName>
    <alternativeName>
        <fullName>Glyoxalase II</fullName>
        <shortName>Glx II</shortName>
    </alternativeName>
</protein>
<keyword id="KW-0007">Acetylation</keyword>
<keyword id="KW-0024">Alternative initiation</keyword>
<keyword id="KW-0963">Cytoplasm</keyword>
<keyword id="KW-0378">Hydrolase</keyword>
<keyword id="KW-0479">Metal-binding</keyword>
<keyword id="KW-0496">Mitochondrion</keyword>
<keyword id="KW-1185">Reference proteome</keyword>
<keyword id="KW-0809">Transit peptide</keyword>
<keyword id="KW-0862">Zinc</keyword>
<comment type="function">
    <text evidence="1">Thiolesterase that catalyzes the hydrolysis of S-D-lactoyl-glutathione to form glutathione and D-lactic acid.</text>
</comment>
<comment type="catalytic activity">
    <reaction evidence="1">
        <text>an S-(2-hydroxyacyl)glutathione + H2O = a 2-hydroxy carboxylate + glutathione + H(+)</text>
        <dbReference type="Rhea" id="RHEA:21864"/>
        <dbReference type="ChEBI" id="CHEBI:15377"/>
        <dbReference type="ChEBI" id="CHEBI:15378"/>
        <dbReference type="ChEBI" id="CHEBI:57925"/>
        <dbReference type="ChEBI" id="CHEBI:58896"/>
        <dbReference type="ChEBI" id="CHEBI:71261"/>
        <dbReference type="EC" id="3.1.2.6"/>
    </reaction>
    <physiologicalReaction direction="left-to-right" evidence="1">
        <dbReference type="Rhea" id="RHEA:21865"/>
    </physiologicalReaction>
</comment>
<comment type="catalytic activity">
    <reaction evidence="1">
        <text>(R)-S-lactoylglutathione + H2O = (R)-lactate + glutathione + H(+)</text>
        <dbReference type="Rhea" id="RHEA:25245"/>
        <dbReference type="ChEBI" id="CHEBI:15377"/>
        <dbReference type="ChEBI" id="CHEBI:15378"/>
        <dbReference type="ChEBI" id="CHEBI:16004"/>
        <dbReference type="ChEBI" id="CHEBI:57474"/>
        <dbReference type="ChEBI" id="CHEBI:57925"/>
        <dbReference type="EC" id="3.1.2.6"/>
    </reaction>
    <physiologicalReaction direction="left-to-right" evidence="1">
        <dbReference type="Rhea" id="RHEA:25246"/>
    </physiologicalReaction>
</comment>
<comment type="cofactor">
    <cofactor evidence="1">
        <name>Zn(2+)</name>
        <dbReference type="ChEBI" id="CHEBI:29105"/>
    </cofactor>
    <text evidence="1">Binds 2 Zn(2+) ions per subunit.</text>
</comment>
<comment type="pathway">
    <text>Secondary metabolite metabolism; methylglyoxal degradation; (R)-lactate from methylglyoxal: step 2/2.</text>
</comment>
<comment type="subunit">
    <text evidence="1">Monomer.</text>
</comment>
<comment type="subcellular location">
    <molecule>Isoform 1</molecule>
    <subcellularLocation>
        <location evidence="1">Mitochondrion matrix</location>
    </subcellularLocation>
</comment>
<comment type="subcellular location">
    <molecule>Isoform 2</molecule>
    <subcellularLocation>
        <location evidence="1">Cytoplasm</location>
    </subcellularLocation>
</comment>
<comment type="alternative products">
    <event type="alternative initiation"/>
    <isoform>
        <id>Q28333-1</id>
        <name>1</name>
        <sequence type="displayed"/>
    </isoform>
    <isoform>
        <id>Q28333-2</id>
        <name>2</name>
        <sequence type="described" ref="VSP_037928"/>
    </isoform>
</comment>
<comment type="tissue specificity">
    <text>Testis.</text>
</comment>
<comment type="miscellaneous">
    <molecule>Isoform 1</molecule>
    <text>A mitochondrial longer isoform in the N-terminus has been proven to exist in orthologs.</text>
</comment>
<comment type="similarity">
    <text evidence="5">Belongs to the metallo-beta-lactamase superfamily. Glyoxalase II family.</text>
</comment>
<comment type="caution">
    <text evidence="5">Only one single gene encoding glyoxalase II has been identified in vertebrates. In yeast and higher plants, separate genes encode the cytosolic and mitochondrial forms of glyoxalase II.</text>
</comment>
<comment type="sequence caution" evidence="5">
    <conflict type="erroneous initiation">
        <sequence resource="EMBL-CDS" id="CAA64612"/>
    </conflict>
    <text>Truncated N-terminus.</text>
</comment>
<comment type="sequence caution" evidence="5">
    <conflict type="miscellaneous discrepancy">
        <sequence resource="EMBL-CDS" id="CAA64612"/>
    </conflict>
    <text>Cloning artifact.</text>
</comment>
<evidence type="ECO:0000250" key="1">
    <source>
        <dbReference type="UniProtKB" id="Q16775"/>
    </source>
</evidence>
<evidence type="ECO:0000250" key="2">
    <source>
        <dbReference type="UniProtKB" id="Q99KB8"/>
    </source>
</evidence>
<evidence type="ECO:0000255" key="3"/>
<evidence type="ECO:0000303" key="4">
    <source ref="1"/>
</evidence>
<evidence type="ECO:0000305" key="5"/>
<proteinExistence type="evidence at transcript level"/>
<accession>Q28333</accession>
<gene>
    <name type="primary">HAGH</name>
</gene>
<sequence length="280" mass="31012">LLGVFHHTDLRKSLTVDEGTMKVEVLPALTDNYMYLVIDDETKEAAIVDPVQPQKVVEEAKKHGVMLTTVLTTHHHWDHAGGNEKLVKLEPGLKVYGGDDRIGGLTHKGTHLSTLQVGSLNVKCLSTPCHTSGHICYFVTKPGGSQPPAVFTGDTLFVAGCGKFYEGTADEMCKALLEVLGRFPPDTRVYCGHEYTINNLKFARHVESGNAAVQEKLAWAKEKYSIGEPAVPSTLAEEFTYNPFMRVREKTVQQHAGETDPVPTMRAVRREKDQFKVPRD</sequence>
<dbReference type="EC" id="3.1.2.6" evidence="1"/>
<dbReference type="EMBL" id="X95294">
    <property type="protein sequence ID" value="CAA64612.1"/>
    <property type="status" value="ALT_SEQ"/>
    <property type="molecule type" value="mRNA"/>
</dbReference>
<dbReference type="RefSeq" id="NP_001254670.1">
    <molecule id="Q28333-2"/>
    <property type="nucleotide sequence ID" value="NM_001267741.1"/>
</dbReference>
<dbReference type="SMR" id="Q28333"/>
<dbReference type="STRING" id="9483.ENSCJAP00000027179"/>
<dbReference type="GeneID" id="100415034"/>
<dbReference type="KEGG" id="cjc:100415034"/>
<dbReference type="CTD" id="3029"/>
<dbReference type="eggNOG" id="KOG0813">
    <property type="taxonomic scope" value="Eukaryota"/>
</dbReference>
<dbReference type="InParanoid" id="Q28333"/>
<dbReference type="OrthoDB" id="515692at2759"/>
<dbReference type="UniPathway" id="UPA00619">
    <property type="reaction ID" value="UER00676"/>
</dbReference>
<dbReference type="Proteomes" id="UP000008225">
    <property type="component" value="Unplaced"/>
</dbReference>
<dbReference type="GO" id="GO:0005759">
    <property type="term" value="C:mitochondrial matrix"/>
    <property type="evidence" value="ECO:0007669"/>
    <property type="project" value="UniProtKB-SubCell"/>
</dbReference>
<dbReference type="GO" id="GO:0004416">
    <property type="term" value="F:hydroxyacylglutathione hydrolase activity"/>
    <property type="evidence" value="ECO:0000250"/>
    <property type="project" value="UniProtKB"/>
</dbReference>
<dbReference type="GO" id="GO:0046872">
    <property type="term" value="F:metal ion binding"/>
    <property type="evidence" value="ECO:0007669"/>
    <property type="project" value="UniProtKB-KW"/>
</dbReference>
<dbReference type="GO" id="GO:0006749">
    <property type="term" value="P:glutathione metabolic process"/>
    <property type="evidence" value="ECO:0007669"/>
    <property type="project" value="TreeGrafter"/>
</dbReference>
<dbReference type="GO" id="GO:0019243">
    <property type="term" value="P:methylglyoxal catabolic process to D-lactate via S-lactoyl-glutathione"/>
    <property type="evidence" value="ECO:0007669"/>
    <property type="project" value="InterPro"/>
</dbReference>
<dbReference type="CDD" id="cd07723">
    <property type="entry name" value="hydroxyacylglutathione_hydrolase_MBL-fold"/>
    <property type="match status" value="1"/>
</dbReference>
<dbReference type="FunFam" id="3.60.15.10:FF:000019">
    <property type="entry name" value="Hydroxyacylglutathione hydrolase, mitochondrial"/>
    <property type="match status" value="1"/>
</dbReference>
<dbReference type="Gene3D" id="3.60.15.10">
    <property type="entry name" value="Ribonuclease Z/Hydroxyacylglutathione hydrolase-like"/>
    <property type="match status" value="1"/>
</dbReference>
<dbReference type="HAMAP" id="MF_01374">
    <property type="entry name" value="Glyoxalase_2"/>
    <property type="match status" value="1"/>
</dbReference>
<dbReference type="InterPro" id="IPR035680">
    <property type="entry name" value="Clx_II_MBL"/>
</dbReference>
<dbReference type="InterPro" id="IPR032282">
    <property type="entry name" value="HAGH_C"/>
</dbReference>
<dbReference type="InterPro" id="IPR017782">
    <property type="entry name" value="Hydroxyacylglutathione_Hdrlase"/>
</dbReference>
<dbReference type="InterPro" id="IPR001279">
    <property type="entry name" value="Metallo-B-lactamas"/>
</dbReference>
<dbReference type="InterPro" id="IPR036866">
    <property type="entry name" value="RibonucZ/Hydroxyglut_hydro"/>
</dbReference>
<dbReference type="NCBIfam" id="TIGR03413">
    <property type="entry name" value="GSH_gloB"/>
    <property type="match status" value="1"/>
</dbReference>
<dbReference type="PANTHER" id="PTHR11935">
    <property type="entry name" value="BETA LACTAMASE DOMAIN"/>
    <property type="match status" value="1"/>
</dbReference>
<dbReference type="PANTHER" id="PTHR11935:SF80">
    <property type="entry name" value="HYDROXYACYLGLUTATHIONE HYDROLASE, MITOCHONDRIAL"/>
    <property type="match status" value="1"/>
</dbReference>
<dbReference type="Pfam" id="PF16123">
    <property type="entry name" value="HAGH_C"/>
    <property type="match status" value="1"/>
</dbReference>
<dbReference type="Pfam" id="PF00753">
    <property type="entry name" value="Lactamase_B"/>
    <property type="match status" value="1"/>
</dbReference>
<dbReference type="PIRSF" id="PIRSF005457">
    <property type="entry name" value="Glx"/>
    <property type="match status" value="1"/>
</dbReference>
<dbReference type="SMART" id="SM00849">
    <property type="entry name" value="Lactamase_B"/>
    <property type="match status" value="1"/>
</dbReference>
<dbReference type="SUPFAM" id="SSF56281">
    <property type="entry name" value="Metallo-hydrolase/oxidoreductase"/>
    <property type="match status" value="1"/>
</dbReference>
<feature type="transit peptide" description="Mitochondrion" evidence="3">
    <location>
        <begin position="1" status="less than"/>
        <end status="unknown"/>
    </location>
</feature>
<feature type="chain" id="PRO_0000192341" description="Hydroxyacylglutathione hydrolase, mitochondrial">
    <location>
        <begin status="unknown"/>
        <end position="280"/>
    </location>
</feature>
<feature type="binding site" evidence="1">
    <location>
        <position position="74"/>
    </location>
    <ligand>
        <name>Zn(2+)</name>
        <dbReference type="ChEBI" id="CHEBI:29105"/>
        <label>1</label>
    </ligand>
</feature>
<feature type="binding site" evidence="1">
    <location>
        <position position="76"/>
    </location>
    <ligand>
        <name>Zn(2+)</name>
        <dbReference type="ChEBI" id="CHEBI:29105"/>
        <label>1</label>
    </ligand>
</feature>
<feature type="binding site" evidence="1">
    <location>
        <position position="78"/>
    </location>
    <ligand>
        <name>Zn(2+)</name>
        <dbReference type="ChEBI" id="CHEBI:29105"/>
        <label>2</label>
    </ligand>
</feature>
<feature type="binding site" evidence="1">
    <location>
        <position position="79"/>
    </location>
    <ligand>
        <name>Zn(2+)</name>
        <dbReference type="ChEBI" id="CHEBI:29105"/>
        <label>2</label>
    </ligand>
</feature>
<feature type="binding site" evidence="1">
    <location>
        <position position="130"/>
    </location>
    <ligand>
        <name>Zn(2+)</name>
        <dbReference type="ChEBI" id="CHEBI:29105"/>
        <label>1</label>
    </ligand>
</feature>
<feature type="binding site" evidence="1">
    <location>
        <position position="154"/>
    </location>
    <ligand>
        <name>Zn(2+)</name>
        <dbReference type="ChEBI" id="CHEBI:29105"/>
        <label>1</label>
    </ligand>
</feature>
<feature type="binding site" evidence="1">
    <location>
        <position position="154"/>
    </location>
    <ligand>
        <name>Zn(2+)</name>
        <dbReference type="ChEBI" id="CHEBI:29105"/>
        <label>2</label>
    </ligand>
</feature>
<feature type="binding site" evidence="1">
    <location>
        <begin position="163"/>
        <end position="165"/>
    </location>
    <ligand>
        <name>substrate</name>
    </ligand>
</feature>
<feature type="binding site" evidence="1">
    <location>
        <begin position="193"/>
        <end position="195"/>
    </location>
    <ligand>
        <name>substrate</name>
    </ligand>
</feature>
<feature type="binding site" evidence="1">
    <location>
        <position position="193"/>
    </location>
    <ligand>
        <name>Zn(2+)</name>
        <dbReference type="ChEBI" id="CHEBI:29105"/>
        <label>2</label>
    </ligand>
</feature>
<feature type="binding site" evidence="1">
    <location>
        <begin position="269"/>
        <end position="272"/>
    </location>
    <ligand>
        <name>substrate</name>
    </ligand>
</feature>
<feature type="modified residue" description="N6-acetyllysine" evidence="2">
    <location>
        <position position="61"/>
    </location>
</feature>
<feature type="modified residue" description="N6-acetyllysine" evidence="2">
    <location>
        <position position="88"/>
    </location>
</feature>
<feature type="modified residue" description="N6-acetyllysine; alternate" evidence="1">
    <location>
        <position position="201"/>
    </location>
</feature>
<feature type="modified residue" description="N6-succinyllysine; alternate" evidence="2">
    <location>
        <position position="201"/>
    </location>
</feature>
<feature type="splice variant" id="VSP_037928" description="In isoform 2." evidence="4">
    <location>
        <begin position="1" status="less than"/>
        <end position="20"/>
    </location>
</feature>
<feature type="non-terminal residue">
    <location>
        <position position="1"/>
    </location>
</feature>
<name>GLO2_CALJA</name>
<organism>
    <name type="scientific">Callithrix jacchus</name>
    <name type="common">White-tufted-ear marmoset</name>
    <dbReference type="NCBI Taxonomy" id="9483"/>
    <lineage>
        <taxon>Eukaryota</taxon>
        <taxon>Metazoa</taxon>
        <taxon>Chordata</taxon>
        <taxon>Craniata</taxon>
        <taxon>Vertebrata</taxon>
        <taxon>Euteleostomi</taxon>
        <taxon>Mammalia</taxon>
        <taxon>Eutheria</taxon>
        <taxon>Euarchontoglires</taxon>
        <taxon>Primates</taxon>
        <taxon>Haplorrhini</taxon>
        <taxon>Platyrrhini</taxon>
        <taxon>Cebidae</taxon>
        <taxon>Callitrichinae</taxon>
        <taxon>Callithrix</taxon>
        <taxon>Callithrix</taxon>
    </lineage>
</organism>
<reference key="1">
    <citation type="submission" date="1996-01" db="EMBL/GenBank/DDBJ databases">
        <authorList>
            <person name="Saunders P.T.K."/>
            <person name="Gaughan J."/>
        </authorList>
    </citation>
    <scope>NUCLEOTIDE SEQUENCE [MRNA] (ISOFORM 2)</scope>
    <scope>PARTIAL NUCLEOTIDE SEQUENCE [MRNA] (ISOFORM 1)</scope>
    <source>
        <tissue>Testis</tissue>
    </source>
</reference>